<protein>
    <recommendedName>
        <fullName>Nitrogenase iron protein</fullName>
        <ecNumber>1.18.6.1</ecNumber>
    </recommendedName>
    <alternativeName>
        <fullName>Nitrogenase Fe protein</fullName>
    </alternativeName>
    <alternativeName>
        <fullName>Nitrogenase component II</fullName>
    </alternativeName>
    <alternativeName>
        <fullName>Nitrogenase reductase</fullName>
    </alternativeName>
</protein>
<comment type="function">
    <text evidence="1">The key enzymatic reactions in nitrogen fixation are catalyzed by the nitrogenase complex, which has 2 components: the iron protein and the molybdenum-iron protein.</text>
</comment>
<comment type="catalytic activity">
    <reaction>
        <text>N2 + 8 reduced [2Fe-2S]-[ferredoxin] + 16 ATP + 16 H2O = H2 + 8 oxidized [2Fe-2S]-[ferredoxin] + 2 NH4(+) + 16 ADP + 16 phosphate + 6 H(+)</text>
        <dbReference type="Rhea" id="RHEA:21448"/>
        <dbReference type="Rhea" id="RHEA-COMP:10000"/>
        <dbReference type="Rhea" id="RHEA-COMP:10001"/>
        <dbReference type="ChEBI" id="CHEBI:15377"/>
        <dbReference type="ChEBI" id="CHEBI:15378"/>
        <dbReference type="ChEBI" id="CHEBI:17997"/>
        <dbReference type="ChEBI" id="CHEBI:18276"/>
        <dbReference type="ChEBI" id="CHEBI:28938"/>
        <dbReference type="ChEBI" id="CHEBI:30616"/>
        <dbReference type="ChEBI" id="CHEBI:33737"/>
        <dbReference type="ChEBI" id="CHEBI:33738"/>
        <dbReference type="ChEBI" id="CHEBI:43474"/>
        <dbReference type="ChEBI" id="CHEBI:456216"/>
        <dbReference type="EC" id="1.18.6.1"/>
    </reaction>
</comment>
<comment type="cofactor">
    <cofactor evidence="1">
        <name>[4Fe-4S] cluster</name>
        <dbReference type="ChEBI" id="CHEBI:49883"/>
    </cofactor>
    <text evidence="1">Binds 1 [4Fe-4S] cluster per dimer.</text>
</comment>
<comment type="subunit">
    <text evidence="1">Homodimer.</text>
</comment>
<comment type="PTM">
    <text evidence="1">The reversible ADP-ribosylation of Arg-102 inactivates the nitrogenase reductase and regulates nitrogenase activity.</text>
</comment>
<comment type="similarity">
    <text evidence="3">Belongs to the NifH/BchL/ChlL family.</text>
</comment>
<gene>
    <name type="primary">nifH</name>
    <name type="ordered locus">GDI0436</name>
    <name type="ordered locus">Gdia_1570</name>
</gene>
<feature type="chain" id="PRO_0000139477" description="Nitrogenase iron protein">
    <location>
        <begin position="1"/>
        <end position="298"/>
    </location>
</feature>
<feature type="binding site" evidence="2">
    <location>
        <begin position="11"/>
        <end position="18"/>
    </location>
    <ligand>
        <name>ATP</name>
        <dbReference type="ChEBI" id="CHEBI:30616"/>
    </ligand>
</feature>
<feature type="binding site" evidence="1">
    <location>
        <position position="99"/>
    </location>
    <ligand>
        <name>[4Fe-4S] cluster</name>
        <dbReference type="ChEBI" id="CHEBI:49883"/>
        <note>ligand shared between dimeric partners</note>
    </ligand>
</feature>
<feature type="binding site" evidence="1">
    <location>
        <position position="133"/>
    </location>
    <ligand>
        <name>[4Fe-4S] cluster</name>
        <dbReference type="ChEBI" id="CHEBI:49883"/>
        <note>ligand shared between dimeric partners</note>
    </ligand>
</feature>
<feature type="modified residue" description="ADP-ribosylarginine; by dinitrogenase reductase ADP-ribosyltransferase" evidence="1">
    <location>
        <position position="102"/>
    </location>
</feature>
<evidence type="ECO:0000250" key="1"/>
<evidence type="ECO:0000255" key="2"/>
<evidence type="ECO:0000305" key="3"/>
<sequence length="298" mass="31873">MSKLRQIAFYGKGGIGKSTTSQNTLAALVEMGQKILIVGCDPKADSTRLILNAKAQDTVLSLAAEAGSVEDLELEDVLKIGYKGIKCVESGGPEPGVGCAGRGVITSINFLEENGAYDDVDYVSYDVLGDVVCGGFAMPIRENKAQEIYIVMSGEMMALYAANNIAKGILKYAHSGGVRLGGLICNERQTDREYDLADALAKRLNSKLVHFVPRANIVQHAELRKQTVIEYAPDSAQAGEYRTLAQKIHANSGQGTVPTPITMEELEDMLLEFGIMKTDEQALAELAAKEAKAAAALA</sequence>
<dbReference type="EC" id="1.18.6.1"/>
<dbReference type="EMBL" id="AF030414">
    <property type="protein sequence ID" value="AAD05046.1"/>
    <property type="molecule type" value="Genomic_DNA"/>
</dbReference>
<dbReference type="EMBL" id="AM889285">
    <property type="protein sequence ID" value="CAP54379.1"/>
    <property type="molecule type" value="Genomic_DNA"/>
</dbReference>
<dbReference type="EMBL" id="CP001189">
    <property type="protein sequence ID" value="ACI51349.1"/>
    <property type="molecule type" value="Genomic_DNA"/>
</dbReference>
<dbReference type="RefSeq" id="WP_012222808.1">
    <property type="nucleotide sequence ID" value="NC_010125.1"/>
</dbReference>
<dbReference type="SMR" id="Q9ZIE4"/>
<dbReference type="STRING" id="272568.GDI0436"/>
<dbReference type="KEGG" id="gdi:GDI0436"/>
<dbReference type="KEGG" id="gdj:Gdia_1570"/>
<dbReference type="eggNOG" id="COG1348">
    <property type="taxonomic scope" value="Bacteria"/>
</dbReference>
<dbReference type="HOGENOM" id="CLU_059373_0_0_5"/>
<dbReference type="OrthoDB" id="9778641at2"/>
<dbReference type="Proteomes" id="UP000001176">
    <property type="component" value="Chromosome"/>
</dbReference>
<dbReference type="GO" id="GO:0051539">
    <property type="term" value="F:4 iron, 4 sulfur cluster binding"/>
    <property type="evidence" value="ECO:0007669"/>
    <property type="project" value="UniProtKB-KW"/>
</dbReference>
<dbReference type="GO" id="GO:0005524">
    <property type="term" value="F:ATP binding"/>
    <property type="evidence" value="ECO:0007669"/>
    <property type="project" value="UniProtKB-UniRule"/>
</dbReference>
<dbReference type="GO" id="GO:0046872">
    <property type="term" value="F:metal ion binding"/>
    <property type="evidence" value="ECO:0007669"/>
    <property type="project" value="UniProtKB-KW"/>
</dbReference>
<dbReference type="GO" id="GO:0016163">
    <property type="term" value="F:nitrogenase activity"/>
    <property type="evidence" value="ECO:0007669"/>
    <property type="project" value="UniProtKB-UniRule"/>
</dbReference>
<dbReference type="GO" id="GO:0009399">
    <property type="term" value="P:nitrogen fixation"/>
    <property type="evidence" value="ECO:0007669"/>
    <property type="project" value="UniProtKB-UniRule"/>
</dbReference>
<dbReference type="CDD" id="cd02040">
    <property type="entry name" value="NifH"/>
    <property type="match status" value="1"/>
</dbReference>
<dbReference type="FunFam" id="3.40.50.300:FF:001379">
    <property type="entry name" value="Nitrogenase iron protein 1"/>
    <property type="match status" value="1"/>
</dbReference>
<dbReference type="Gene3D" id="3.40.50.300">
    <property type="entry name" value="P-loop containing nucleotide triphosphate hydrolases"/>
    <property type="match status" value="1"/>
</dbReference>
<dbReference type="HAMAP" id="MF_00533">
    <property type="entry name" value="NifH"/>
    <property type="match status" value="1"/>
</dbReference>
<dbReference type="InterPro" id="IPR030655">
    <property type="entry name" value="NifH/chlL_CS"/>
</dbReference>
<dbReference type="InterPro" id="IPR000392">
    <property type="entry name" value="NifH/frxC"/>
</dbReference>
<dbReference type="InterPro" id="IPR005977">
    <property type="entry name" value="Nitrogenase_Fe_NifH"/>
</dbReference>
<dbReference type="InterPro" id="IPR027417">
    <property type="entry name" value="P-loop_NTPase"/>
</dbReference>
<dbReference type="NCBIfam" id="TIGR01287">
    <property type="entry name" value="nifH"/>
    <property type="match status" value="1"/>
</dbReference>
<dbReference type="PANTHER" id="PTHR42864">
    <property type="entry name" value="LIGHT-INDEPENDENT PROTOCHLOROPHYLLIDE REDUCTASE IRON-SULFUR ATP-BINDING PROTEIN"/>
    <property type="match status" value="1"/>
</dbReference>
<dbReference type="PANTHER" id="PTHR42864:SF2">
    <property type="entry name" value="LIGHT-INDEPENDENT PROTOCHLOROPHYLLIDE REDUCTASE IRON-SULFUR ATP-BINDING PROTEIN"/>
    <property type="match status" value="1"/>
</dbReference>
<dbReference type="Pfam" id="PF00142">
    <property type="entry name" value="Fer4_NifH"/>
    <property type="match status" value="1"/>
</dbReference>
<dbReference type="PIRSF" id="PIRSF000363">
    <property type="entry name" value="Nitrogenase_iron"/>
    <property type="match status" value="1"/>
</dbReference>
<dbReference type="PRINTS" id="PR00091">
    <property type="entry name" value="NITROGNASEII"/>
</dbReference>
<dbReference type="SUPFAM" id="SSF52540">
    <property type="entry name" value="P-loop containing nucleoside triphosphate hydrolases"/>
    <property type="match status" value="1"/>
</dbReference>
<dbReference type="PROSITE" id="PS00746">
    <property type="entry name" value="NIFH_FRXC_1"/>
    <property type="match status" value="1"/>
</dbReference>
<dbReference type="PROSITE" id="PS00692">
    <property type="entry name" value="NIFH_FRXC_2"/>
    <property type="match status" value="1"/>
</dbReference>
<dbReference type="PROSITE" id="PS51026">
    <property type="entry name" value="NIFH_FRXC_3"/>
    <property type="match status" value="1"/>
</dbReference>
<name>NIFH_GLUDA</name>
<reference key="1">
    <citation type="journal article" date="1998" name="Symbiosis">
        <title>Contributions of the bacterial endophyte Acetobacter diazotrophicus to sugarcane nutrition: a preliminary study.</title>
        <authorList>
            <person name="Sevilla M.Q."/>
            <person name="de Oliviera A."/>
            <person name="Baldani I."/>
            <person name="Kennedy C."/>
        </authorList>
    </citation>
    <scope>NUCLEOTIDE SEQUENCE [GENOMIC DNA]</scope>
</reference>
<reference key="2">
    <citation type="journal article" date="2009" name="BMC Genomics">
        <title>Complete genome sequence of the sugarcane nitrogen-fixing endophyte Gluconacetobacter diazotrophicus Pal5.</title>
        <authorList>
            <person name="Bertalan M."/>
            <person name="Albano R."/>
            <person name="de Padua V."/>
            <person name="Rouws L."/>
            <person name="Rojas C."/>
            <person name="Hemerly A."/>
            <person name="Teixeira K."/>
            <person name="Schwab S."/>
            <person name="Araujo J."/>
            <person name="Oliveira A."/>
            <person name="Franca L."/>
            <person name="Magalhaes V."/>
            <person name="Alqueres S."/>
            <person name="Cardoso A."/>
            <person name="Almeida W."/>
            <person name="Loureiro M.M."/>
            <person name="Nogueira E."/>
            <person name="Cidade D."/>
            <person name="Oliveira D."/>
            <person name="Simao T."/>
            <person name="Macedo J."/>
            <person name="Valadao A."/>
            <person name="Dreschsel M."/>
            <person name="Freitas F."/>
            <person name="Vidal M."/>
            <person name="Guedes H."/>
            <person name="Rodrigues E."/>
            <person name="Meneses C."/>
            <person name="Brioso P."/>
            <person name="Pozzer L."/>
            <person name="Figueiredo D."/>
            <person name="Montano H."/>
            <person name="Junior J."/>
            <person name="de Souza Filho G."/>
            <person name="Martin Quintana Flores V."/>
            <person name="Ferreira B."/>
            <person name="Branco A."/>
            <person name="Gonzalez P."/>
            <person name="Guillobel H."/>
            <person name="Lemos M."/>
            <person name="Seibel L."/>
            <person name="Macedo J."/>
            <person name="Alves-Ferreira M."/>
            <person name="Sachetto-Martins G."/>
            <person name="Coelho A."/>
            <person name="Santos E."/>
            <person name="Amaral G."/>
            <person name="Neves A."/>
            <person name="Pacheco A.B."/>
            <person name="Carvalho D."/>
            <person name="Lery L."/>
            <person name="Bisch P."/>
            <person name="Rossle S.C."/>
            <person name="Urmenyi T."/>
            <person name="Rael Pereira A."/>
            <person name="Silva R."/>
            <person name="Rondinelli E."/>
            <person name="von Kruger W."/>
            <person name="Martins O."/>
            <person name="Baldani J.I."/>
            <person name="Ferreira P.C."/>
        </authorList>
    </citation>
    <scope>NUCLEOTIDE SEQUENCE [LARGE SCALE GENOMIC DNA]</scope>
    <source>
        <strain>ATCC 49037 / DSM 5601 / CCUG 37298 / CIP 103539 / LMG 7603 / PAl5</strain>
    </source>
</reference>
<reference key="3">
    <citation type="journal article" date="2010" name="Stand. Genomic Sci.">
        <title>Two genome sequences of the same bacterial strain, Gluconacetobacter diazotrophicus PAl 5, suggest a new standard in genome sequence submission.</title>
        <authorList>
            <person name="Giongo A."/>
            <person name="Tyler H.L."/>
            <person name="Zipperer U.N."/>
            <person name="Triplett E.W."/>
        </authorList>
    </citation>
    <scope>NUCLEOTIDE SEQUENCE [LARGE SCALE GENOMIC DNA]</scope>
    <source>
        <strain>ATCC 49037 / DSM 5601 / CCUG 37298 / CIP 103539 / LMG 7603 / PAl5</strain>
    </source>
</reference>
<accession>Q9ZIE4</accession>
<accession>A9H5W3</accession>
<accession>B5ZJE9</accession>
<proteinExistence type="inferred from homology"/>
<keyword id="KW-0004">4Fe-4S</keyword>
<keyword id="KW-0013">ADP-ribosylation</keyword>
<keyword id="KW-0067">ATP-binding</keyword>
<keyword id="KW-0408">Iron</keyword>
<keyword id="KW-0411">Iron-sulfur</keyword>
<keyword id="KW-0479">Metal-binding</keyword>
<keyword id="KW-0535">Nitrogen fixation</keyword>
<keyword id="KW-0547">Nucleotide-binding</keyword>
<keyword id="KW-0560">Oxidoreductase</keyword>
<keyword id="KW-1185">Reference proteome</keyword>
<organism>
    <name type="scientific">Gluconacetobacter diazotrophicus (strain ATCC 49037 / DSM 5601 / CCUG 37298 / CIP 103539 / LMG 7603 / PAl5)</name>
    <dbReference type="NCBI Taxonomy" id="272568"/>
    <lineage>
        <taxon>Bacteria</taxon>
        <taxon>Pseudomonadati</taxon>
        <taxon>Pseudomonadota</taxon>
        <taxon>Alphaproteobacteria</taxon>
        <taxon>Acetobacterales</taxon>
        <taxon>Acetobacteraceae</taxon>
        <taxon>Gluconacetobacter</taxon>
    </lineage>
</organism>